<name>ORF9B_SARS2</name>
<gene>
    <name type="ORF">9b</name>
</gene>
<comment type="function">
    <text evidence="4 7">Plays a role in inhibiting the host innate immune response by targeting the mitochondrial-associated innate immune response. Acts by binding to host TOMM70, inhibiting its binding to HSP90AB1 thereby disrupting the interferon activation pathway.</text>
</comment>
<comment type="subunit">
    <text evidence="4 5 6 7 8">Homodimer (Ref.5). Interacts with host TOMM70 (PubMed:33060197, PubMed:32728199, PubMed:34502139, PubMed:33990585); the interaction occurs only with monomer (PubMed:33990585).</text>
</comment>
<comment type="interaction">
    <interactant intactId="EBI-25475909">
        <id>P0DTD2</id>
    </interactant>
    <interactant intactId="EBI-25475909">
        <id>P0DTD2</id>
        <label>9b</label>
    </interactant>
    <organismsDiffer>false</organismsDiffer>
    <experiments>5</experiments>
</comment>
<comment type="interaction">
    <interactant intactId="EBI-25475909">
        <id>P0DTD2</id>
    </interactant>
    <interactant intactId="EBI-81279">
        <id>Q9Y6K9</id>
        <label>IKBKG</label>
    </interactant>
    <organismsDiffer>true</organismsDiffer>
    <experiments>3</experiments>
</comment>
<comment type="interaction">
    <interactant intactId="EBI-25475909">
        <id>P0DTD2</id>
    </interactant>
    <interactant intactId="EBI-2800236">
        <id>O94826</id>
        <label>TOMM70</label>
    </interactant>
    <organismsDiffer>true</organismsDiffer>
    <experiments>28</experiments>
</comment>
<comment type="subcellular location">
    <subcellularLocation>
        <location evidence="4 5 7">Host cytoplasm</location>
    </subcellularLocation>
    <subcellularLocation>
        <location evidence="4 5">Host mitochondrion</location>
    </subcellularLocation>
</comment>
<comment type="polymorphism">
    <text evidence="9">Variant Omicron/BA.1 and BA.2 belong to a lineage first isolated in South Africa (November 2021).</text>
</comment>
<comment type="polymorphism">
    <text evidence="9">Variant Omicron/BQ.1.1 belongs to a lineage first isolated in Nigeria (November 2022).</text>
</comment>
<comment type="polymorphism">
    <text evidence="9">Variant Omicron/XBB.1.5 belongs to a lineage first isolated in United States (November 2022). It is the result of recombination between omicron BJ.1 and BM.1.1. Moreover XBB.1.5 do not express ORF8.</text>
</comment>
<comment type="miscellaneous">
    <text evidence="3">The open reading frame (ORF) encoding for this protein overlaps with the N ORF.</text>
</comment>
<comment type="similarity">
    <text evidence="9">Belongs to the coronavirus group 2 protein 9b family.</text>
</comment>
<accession>P0DTD2</accession>
<organismHost>
    <name type="scientific">Homo sapiens</name>
    <name type="common">Human</name>
    <dbReference type="NCBI Taxonomy" id="9606"/>
</organismHost>
<proteinExistence type="evidence at protein level"/>
<sequence length="97" mass="10797">MDPKISEMHPALRLVDPQIQLAVTRMENAVGRDQNNVGPKVYPIILRLGSPLSLNMARKTLNSLEDKAFQLTPIAVQMTKLATTEELPDEFVVVTVK</sequence>
<evidence type="ECO:0000250" key="1">
    <source>
        <dbReference type="UniProtKB" id="P59636"/>
    </source>
</evidence>
<evidence type="ECO:0000255" key="2">
    <source>
        <dbReference type="PROSITE-ProRule" id="PRU01268"/>
    </source>
</evidence>
<evidence type="ECO:0000269" key="3">
    <source>
    </source>
</evidence>
<evidence type="ECO:0000269" key="4">
    <source>
    </source>
</evidence>
<evidence type="ECO:0000269" key="5">
    <source>
    </source>
</evidence>
<evidence type="ECO:0000269" key="6">
    <source>
    </source>
</evidence>
<evidence type="ECO:0000269" key="7">
    <source>
    </source>
</evidence>
<evidence type="ECO:0000269" key="8">
    <source ref="5"/>
</evidence>
<evidence type="ECO:0000305" key="9"/>
<evidence type="ECO:0007744" key="10">
    <source>
        <dbReference type="PDB" id="6Z4U"/>
    </source>
</evidence>
<evidence type="ECO:0007829" key="11">
    <source>
        <dbReference type="PDB" id="6Z4U"/>
    </source>
</evidence>
<evidence type="ECO:0007829" key="12">
    <source>
        <dbReference type="PDB" id="7YE7"/>
    </source>
</evidence>
<keyword id="KW-0002">3D-structure</keyword>
<keyword id="KW-1035">Host cytoplasm</keyword>
<keyword id="KW-1045">Host mitochondrion</keyword>
<keyword id="KW-0945">Host-virus interaction</keyword>
<keyword id="KW-1090">Inhibition of host innate immune response by virus</keyword>
<keyword id="KW-1097">Inhibition of host MAVS by virus</keyword>
<keyword id="KW-1113">Inhibition of host RLR pathway by virus</keyword>
<keyword id="KW-1185">Reference proteome</keyword>
<keyword id="KW-0899">Viral immunoevasion</keyword>
<feature type="chain" id="PRO_0000449657" description="ORF9b protein" evidence="1">
    <location>
        <begin position="1"/>
        <end position="97"/>
    </location>
</feature>
<feature type="domain" description="9b" evidence="2">
    <location>
        <begin position="8"/>
        <end position="97"/>
    </location>
</feature>
<feature type="short sequence motif" description="Nuclear export signal" evidence="1">
    <location>
        <begin position="45"/>
        <end position="53"/>
    </location>
</feature>
<feature type="sequence variant" description="In strain: Omicron/BA.1, Omicron/BA.2, Omicron/BA.2.12.1, Omicron/BA.4, Omicron/BA.5, Omicron/XBB.1.5, Omicron/EG.5.1." evidence="9">
    <original>P</original>
    <variation>S</variation>
    <location>
        <position position="10"/>
    </location>
</feature>
<feature type="sequence variant" description="In strain: Omicron/BA.1, Omicron/BA.2, Omicron/BA.2.12.1, Omicron/BA.4, Omicron/BA.5, Omicron/XBB.1.5, Omicron/EG.5.1." evidence="9">
    <location>
        <begin position="27"/>
        <end position="29"/>
    </location>
</feature>
<feature type="sequence variant" description="In strain: Delta/B.1.617.2." evidence="9">
    <original>T</original>
    <variation>A</variation>
    <location>
        <position position="60"/>
    </location>
</feature>
<feature type="sequence variant" description="In strain: Gamma/P.1." evidence="9">
    <original>Q</original>
    <variation>E</variation>
    <location>
        <position position="77"/>
    </location>
</feature>
<feature type="mutagenesis site" description="Complete loss of binding to host TOMM70." evidence="7">
    <original>S</original>
    <variation>E</variation>
    <location>
        <position position="53"/>
    </location>
</feature>
<feature type="helix" evidence="11">
    <location>
        <begin position="5"/>
        <end position="7"/>
    </location>
</feature>
<feature type="strand" evidence="11">
    <location>
        <begin position="12"/>
        <end position="15"/>
    </location>
</feature>
<feature type="strand" evidence="11">
    <location>
        <begin position="19"/>
        <end position="23"/>
    </location>
</feature>
<feature type="strand" evidence="11">
    <location>
        <begin position="40"/>
        <end position="42"/>
    </location>
</feature>
<feature type="strand" evidence="11">
    <location>
        <begin position="44"/>
        <end position="50"/>
    </location>
</feature>
<feature type="strand" evidence="11">
    <location>
        <begin position="52"/>
        <end position="61"/>
    </location>
</feature>
<feature type="strand" evidence="11">
    <location>
        <begin position="64"/>
        <end position="66"/>
    </location>
</feature>
<feature type="strand" evidence="11">
    <location>
        <begin position="68"/>
        <end position="74"/>
    </location>
</feature>
<feature type="strand" evidence="12">
    <location>
        <begin position="78"/>
        <end position="80"/>
    </location>
</feature>
<feature type="helix" evidence="11">
    <location>
        <begin position="84"/>
        <end position="86"/>
    </location>
</feature>
<feature type="strand" evidence="11">
    <location>
        <begin position="89"/>
        <end position="96"/>
    </location>
</feature>
<reference key="1">
    <citation type="journal article" date="2020" name="Nature">
        <title>A new coronavirus associated with human respiratory disease in China.</title>
        <authorList>
            <person name="Wu F."/>
            <person name="Zhao S."/>
            <person name="Yu B."/>
            <person name="Chen Y.-M."/>
            <person name="Wang W."/>
            <person name="Song Z.-G."/>
            <person name="Hu Y."/>
            <person name="Tao Z.-W."/>
            <person name="Tian J.-H."/>
            <person name="Pei Y.-Y."/>
            <person name="Yuan M.-L."/>
            <person name="Zhang Y.-L."/>
            <person name="Dai F.-H."/>
            <person name="Liu Y."/>
            <person name="Wang Q.-M."/>
            <person name="Zheng J.-J."/>
            <person name="Xu L."/>
            <person name="Holmes E.C."/>
            <person name="Zhang Y.-Z."/>
        </authorList>
    </citation>
    <scope>NUCLEOTIDE SEQUENCE [GENOMIC RNA]</scope>
</reference>
<reference key="2">
    <citation type="journal article" date="2020" name="Science">
        <title>Comparative host-coronavirus protein interaction networks reveal pan-viral disease mechanisms.</title>
        <authorList>
            <consortium name="QCRG Structural Biology Consortium"/>
            <consortium name="Zoonomia Consortium"/>
            <person name="Gordon D.E."/>
            <person name="Hiatt J."/>
            <person name="Bouhaddou M."/>
            <person name="Rezelj V.V."/>
            <person name="Ulferts S."/>
            <person name="Braberg H."/>
            <person name="Jureka A.S."/>
            <person name="Obernier K."/>
            <person name="Guo J.Z."/>
            <person name="Batra J."/>
            <person name="Kaake R.M."/>
            <person name="Weckstein A.R."/>
            <person name="Owens T.W."/>
            <person name="Gupta M."/>
            <person name="Pourmal S."/>
            <person name="Titus E.W."/>
            <person name="Cakir M."/>
            <person name="Soucheray M."/>
            <person name="McGregor M."/>
            <person name="Cakir Z."/>
            <person name="Jang G."/>
            <person name="O'Meara M.J."/>
            <person name="Tummino T.A."/>
            <person name="Zhang Z."/>
            <person name="Foussard H."/>
            <person name="Rojc A."/>
            <person name="Zhou Y."/>
            <person name="Kuchenov D."/>
            <person name="Huettenhain R."/>
            <person name="Xu J."/>
            <person name="Eckhardt M."/>
            <person name="Swaney D.L."/>
            <person name="Fabius J.M."/>
            <person name="Ummadi M."/>
            <person name="Tutuncuoglu B."/>
            <person name="Rathore U."/>
            <person name="Modak M."/>
            <person name="Haas P."/>
            <person name="Haas K.M."/>
            <person name="Naing Z.Z.C."/>
            <person name="Pulido E.H."/>
            <person name="Shi Y."/>
            <person name="Barrio-Hernandez I."/>
            <person name="Memon D."/>
            <person name="Petsalaki E."/>
            <person name="Dunham A."/>
            <person name="Marrero M.C."/>
            <person name="Burke D."/>
            <person name="Koh C."/>
            <person name="Vallet T."/>
            <person name="Silvas J.A."/>
            <person name="Azumaya C.M."/>
            <person name="Billesboelle C."/>
            <person name="Brilot A.F."/>
            <person name="Campbell M.G."/>
            <person name="Diallo A."/>
            <person name="Dickinson M.S."/>
            <person name="Diwanji D."/>
            <person name="Herrera N."/>
            <person name="Hoppe N."/>
            <person name="Kratochvil H.T."/>
            <person name="Liu Y."/>
            <person name="Merz G.E."/>
            <person name="Moritz M."/>
            <person name="Nguyen H.C."/>
            <person name="Nowotny C."/>
            <person name="Puchades C."/>
            <person name="Rizo A.N."/>
            <person name="Schulze-Gahmen U."/>
            <person name="Smith A.M."/>
            <person name="Sun M."/>
            <person name="Young I.D."/>
            <person name="Zhao J."/>
            <person name="Asarnow D."/>
            <person name="Biel J."/>
            <person name="Bowen A."/>
            <person name="Braxton J.R."/>
            <person name="Chen J."/>
            <person name="Chio C.M."/>
            <person name="Chio U.S."/>
            <person name="Deshpande I."/>
            <person name="Doan L."/>
            <person name="Faust B."/>
            <person name="Flores S."/>
            <person name="Jin M."/>
            <person name="Kim K."/>
            <person name="Lam V.L."/>
            <person name="Li F."/>
            <person name="Li J."/>
            <person name="Li Y.L."/>
            <person name="Li Y."/>
            <person name="Liu X."/>
            <person name="Lo M."/>
            <person name="Lopez K.E."/>
            <person name="Melo A.A."/>
            <person name="Moss F.R. III"/>
            <person name="Nguyen P."/>
            <person name="Paulino J."/>
            <person name="Pawar K.I."/>
            <person name="Peters J.K."/>
            <person name="Pospiech T.H. Jr."/>
            <person name="Safari M."/>
            <person name="Sangwan S."/>
            <person name="Schaefer K."/>
            <person name="Thomas P.V."/>
            <person name="Thwin A.C."/>
            <person name="Trenker R."/>
            <person name="Tse E."/>
            <person name="Tsui T.K.M."/>
            <person name="Wang F."/>
            <person name="Whitis N."/>
            <person name="Yu Z."/>
            <person name="Zhang K."/>
            <person name="Zhang Y."/>
            <person name="Zhou F."/>
            <person name="Saltzberg D."/>
            <person name="Hodder A.J."/>
            <person name="Shun-Shion A.S."/>
            <person name="Williams D.M."/>
            <person name="White K.M."/>
            <person name="Rosales R."/>
            <person name="Kehrer T."/>
            <person name="Miorin L."/>
            <person name="Moreno E."/>
            <person name="Patel A.H."/>
            <person name="Rihn S."/>
            <person name="Khalid M.M."/>
            <person name="Vallejo-Gracia A."/>
            <person name="Fozouni P."/>
            <person name="Simoneau C.R."/>
            <person name="Roth T.L."/>
            <person name="Wu D."/>
            <person name="Karim M.A."/>
            <person name="Ghoussaini M."/>
            <person name="Dunham I."/>
            <person name="Berardi F."/>
            <person name="Weigang S."/>
            <person name="Chazal M."/>
            <person name="Park J."/>
            <person name="Logue J."/>
            <person name="McGrath M."/>
            <person name="Weston S."/>
            <person name="Haupt R."/>
            <person name="Hastie C.J."/>
            <person name="Elliott M."/>
            <person name="Brown F."/>
            <person name="Burness K.A."/>
            <person name="Reid E."/>
            <person name="Dorward M."/>
            <person name="Johnson C."/>
            <person name="Wilkinson S.G."/>
            <person name="Geyer A."/>
            <person name="Giesel D.M."/>
            <person name="Baillie C."/>
            <person name="Raggett S."/>
            <person name="Leech H."/>
            <person name="Toth R."/>
            <person name="Goodman N."/>
            <person name="Keough K.C."/>
            <person name="Lind A.L."/>
            <person name="Klesh R.J."/>
            <person name="Hemphill K.R."/>
            <person name="Carlson-Stevermer J."/>
            <person name="Oki J."/>
            <person name="Holden K."/>
            <person name="Maures T."/>
            <person name="Pollard K.S."/>
            <person name="Sali A."/>
            <person name="Agard D.A."/>
            <person name="Cheng Y."/>
            <person name="Fraser J.S."/>
            <person name="Frost A."/>
            <person name="Jura N."/>
            <person name="Kortemme T."/>
            <person name="Manglik A."/>
            <person name="Southworth D.R."/>
            <person name="Stroud R.M."/>
            <person name="Alessi D.R."/>
            <person name="Davies P."/>
            <person name="Frieman M.B."/>
            <person name="Ideker T."/>
            <person name="Abate C."/>
            <person name="Jouvenet N."/>
            <person name="Kochs G."/>
            <person name="Shoichet B."/>
            <person name="Ott M."/>
            <person name="Palmarini M."/>
            <person name="Shokat K.M."/>
            <person name="Garcia-Sastre A."/>
            <person name="Rassen J.A."/>
            <person name="Grosse R."/>
            <person name="Rosenberg O.S."/>
            <person name="Verba K.A."/>
            <person name="Basler C.F."/>
            <person name="Vignuzzi M."/>
            <person name="Peden A.A."/>
            <person name="Beltrao P."/>
            <person name="Krogan N.J."/>
        </authorList>
    </citation>
    <scope>STRUCTURE BY ELECTRON MICROSCOPY (3.05 ANGSTROMS)</scope>
    <scope>INTERACTION WITH HUMAN TOMM70</scope>
    <scope>SUBCELLULAR LOCATION</scope>
</reference>
<reference key="3">
    <citation type="journal article" date="2020" name="Cell. Mol. Immunol.">
        <title>SARS-CoV-2 Orf9b suppresses type I interferon responses by targeting TOM70.</title>
        <authorList>
            <person name="Jiang H.W."/>
            <person name="Zhang H.N."/>
            <person name="Meng Q.F."/>
            <person name="Xie J."/>
            <person name="Li Y."/>
            <person name="Chen H."/>
            <person name="Zheng Y.X."/>
            <person name="Wang X.N."/>
            <person name="Qi H."/>
            <person name="Zhang J."/>
            <person name="Wang P.H."/>
            <person name="Han Z.G."/>
            <person name="Tao S.C."/>
        </authorList>
    </citation>
    <scope>FUNCTION</scope>
    <scope>INTERACTION WITH HOST TOMM70</scope>
</reference>
<reference key="4">
    <citation type="journal article" date="2021" name="Int. J. Mol. Sci.">
        <title>Phosphorylation of SARS-CoV-2 Orf9b Regulates Its Targeting to Two Binding Sites in TOM70 and Recruitment of Hsp90.</title>
        <authorList>
            <person name="Brandherm L."/>
            <person name="Kobas A.M."/>
            <person name="Kloehn M."/>
            <person name="Brueggemann Y."/>
            <person name="Pfaender S."/>
            <person name="Rassow J."/>
            <person name="Kreimendahl S."/>
        </authorList>
    </citation>
    <scope>FUNCTION</scope>
    <scope>MUTAGENESIS OF SER-53</scope>
    <scope>SUBCELLULAR LOCATION</scope>
    <scope>INTERACTION WITH HOST TOMM70</scope>
</reference>
<reference evidence="10" key="5">
    <citation type="submission" date="2020-05" db="PDB data bank">
        <title>X-ray Crystallographic Structure of Orf9b from SARS-CoV-2.</title>
        <authorList>
            <person name="Weeks S.D."/>
            <person name="De Graef S."/>
            <person name="Munawar A."/>
        </authorList>
    </citation>
    <scope>X-RAY CRYSTALLOGRAPHY (1.95 ANGSTROMS)</scope>
    <scope>HOMODIMERIZATION</scope>
</reference>
<reference key="6">
    <citation type="journal article" date="2021" name="Nat. Commun.">
        <title>Crystal structure of SARS-CoV-2 Orf9b in complex with human TOM70 suggests unusual virus-host interactions.</title>
        <authorList>
            <person name="Gao X."/>
            <person name="Zhu K."/>
            <person name="Qin B."/>
            <person name="Olieric V."/>
            <person name="Wang M."/>
            <person name="Cui S."/>
        </authorList>
    </citation>
    <scope>STRUCTURE BY ELECTRON MICROSCOPY (2.20 ANGSTROMS) OF 1-97</scope>
    <scope>INTERACTION WITH HOST TOMM70</scope>
</reference>
<organism>
    <name type="scientific">Severe acute respiratory syndrome coronavirus 2</name>
    <name type="common">2019-nCoV</name>
    <name type="synonym">SARS-CoV-2</name>
    <dbReference type="NCBI Taxonomy" id="2697049"/>
    <lineage>
        <taxon>Viruses</taxon>
        <taxon>Riboviria</taxon>
        <taxon>Orthornavirae</taxon>
        <taxon>Pisuviricota</taxon>
        <taxon>Pisoniviricetes</taxon>
        <taxon>Nidovirales</taxon>
        <taxon>Cornidovirineae</taxon>
        <taxon>Coronaviridae</taxon>
        <taxon>Orthocoronavirinae</taxon>
        <taxon>Betacoronavirus</taxon>
        <taxon>Sarbecovirus</taxon>
        <taxon>Severe acute respiratory syndrome coronavirus</taxon>
    </lineage>
</organism>
<dbReference type="EMBL" id="MN908947">
    <property type="status" value="NOT_ANNOTATED_CDS"/>
    <property type="molecule type" value="Genomic_RNA"/>
</dbReference>
<dbReference type="PDB" id="6Z4U">
    <property type="method" value="X-ray"/>
    <property type="resolution" value="1.95 A"/>
    <property type="chains" value="A/B=1-97"/>
</dbReference>
<dbReference type="PDB" id="7DHG">
    <property type="method" value="X-ray"/>
    <property type="resolution" value="2.20 A"/>
    <property type="chains" value="B=1-97"/>
</dbReference>
<dbReference type="PDB" id="7KDT">
    <property type="method" value="EM"/>
    <property type="resolution" value="3.05 A"/>
    <property type="chains" value="B=1-97"/>
</dbReference>
<dbReference type="PDB" id="7YE7">
    <property type="method" value="X-ray"/>
    <property type="resolution" value="2.95 A"/>
    <property type="chains" value="A/B/C/D=1-97"/>
</dbReference>
<dbReference type="PDB" id="7YE8">
    <property type="method" value="X-ray"/>
    <property type="resolution" value="3.01 A"/>
    <property type="chains" value="A/B/C/D=1-97"/>
</dbReference>
<dbReference type="PDB" id="9MZB">
    <property type="method" value="X-ray"/>
    <property type="resolution" value="2.80 A"/>
    <property type="chains" value="A/B=1-97"/>
</dbReference>
<dbReference type="PDB" id="9N55">
    <property type="method" value="X-ray"/>
    <property type="resolution" value="1.65 A"/>
    <property type="chains" value="A/B=1-97"/>
</dbReference>
<dbReference type="PDBsum" id="6Z4U"/>
<dbReference type="PDBsum" id="7DHG"/>
<dbReference type="PDBsum" id="7KDT"/>
<dbReference type="PDBsum" id="7YE7"/>
<dbReference type="PDBsum" id="7YE8"/>
<dbReference type="PDBsum" id="9MZB"/>
<dbReference type="PDBsum" id="9N55"/>
<dbReference type="EMDB" id="EMD-22829"/>
<dbReference type="SMR" id="P0DTD2"/>
<dbReference type="BioGRID" id="4383874">
    <property type="interactions" value="630"/>
</dbReference>
<dbReference type="ComplexPortal" id="CPX-6100">
    <property type="entry name" value="SARS-CoV-2 9b complex"/>
</dbReference>
<dbReference type="FunCoup" id="P0DTD2">
    <property type="interactions" value="105"/>
</dbReference>
<dbReference type="IntAct" id="P0DTD2">
    <property type="interactions" value="94"/>
</dbReference>
<dbReference type="MINT" id="P0DTD2"/>
<dbReference type="iPTMnet" id="P0DTD2"/>
<dbReference type="AGR" id="RefSeq:P0DTD2"/>
<dbReference type="Reactome" id="R-HSA-168928">
    <property type="pathway name" value="DDX58/IFIH1-mediated induction of interferon-alpha/beta"/>
</dbReference>
<dbReference type="Reactome" id="R-HSA-9705671">
    <property type="pathway name" value="SARS-CoV-2 activates/modulates innate and adaptive immune responses"/>
</dbReference>
<dbReference type="Reactome" id="R-HSA-9727281">
    <property type="pathway name" value="Translation of Accessory Proteins"/>
</dbReference>
<dbReference type="PRO" id="PR:P0DTD2"/>
<dbReference type="Proteomes" id="UP000464024">
    <property type="component" value="Genome"/>
</dbReference>
<dbReference type="GO" id="GO:0033650">
    <property type="term" value="C:host cell mitochondrion"/>
    <property type="evidence" value="ECO:0007669"/>
    <property type="project" value="UniProtKB-SubCell"/>
</dbReference>
<dbReference type="GO" id="GO:0031966">
    <property type="term" value="C:mitochondrial membrane"/>
    <property type="evidence" value="ECO:0000314"/>
    <property type="project" value="UniProt"/>
</dbReference>
<dbReference type="GO" id="GO:0098799">
    <property type="term" value="C:outer mitochondrial membrane protein complex"/>
    <property type="evidence" value="ECO:0000353"/>
    <property type="project" value="ComplexPortal"/>
</dbReference>
<dbReference type="GO" id="GO:0042802">
    <property type="term" value="F:identical protein binding"/>
    <property type="evidence" value="ECO:0000353"/>
    <property type="project" value="IntAct"/>
</dbReference>
<dbReference type="GO" id="GO:0140311">
    <property type="term" value="F:protein sequestering activity"/>
    <property type="evidence" value="ECO:0000314"/>
    <property type="project" value="UniProt"/>
</dbReference>
<dbReference type="GO" id="GO:0050687">
    <property type="term" value="P:negative regulation of defense response to virus"/>
    <property type="evidence" value="ECO:0000314"/>
    <property type="project" value="ComplexPortal"/>
</dbReference>
<dbReference type="GO" id="GO:0090258">
    <property type="term" value="P:negative regulation of mitochondrial fission"/>
    <property type="evidence" value="ECO:0000303"/>
    <property type="project" value="ComplexPortal"/>
</dbReference>
<dbReference type="GO" id="GO:2000786">
    <property type="term" value="P:positive regulation of autophagosome assembly"/>
    <property type="evidence" value="ECO:0000303"/>
    <property type="project" value="ComplexPortal"/>
</dbReference>
<dbReference type="GO" id="GO:0039545">
    <property type="term" value="P:symbiont-mediated suppression of host cytoplasmic pattern recognition receptor signaling pathway via inhibition of MAVS activity"/>
    <property type="evidence" value="ECO:0000314"/>
    <property type="project" value="UniProt"/>
</dbReference>
<dbReference type="GO" id="GO:0039502">
    <property type="term" value="P:symbiont-mediated suppression of host type I interferon-mediated signaling pathway"/>
    <property type="evidence" value="ECO:0000314"/>
    <property type="project" value="ComplexPortal"/>
</dbReference>
<dbReference type="CDD" id="cd21955">
    <property type="entry name" value="SARS-CoV_ORF9b"/>
    <property type="match status" value="1"/>
</dbReference>
<dbReference type="InterPro" id="IPR018542">
    <property type="entry name" value="Protein_9b_Betacoronavirus"/>
</dbReference>
<dbReference type="InterPro" id="IPR037223">
    <property type="entry name" value="Protein_9b_SARS"/>
</dbReference>
<dbReference type="Pfam" id="PF09399">
    <property type="entry name" value="bCoV_lipid_BD"/>
    <property type="match status" value="1"/>
</dbReference>
<dbReference type="SUPFAM" id="SSF141666">
    <property type="entry name" value="SARS ORF9b-like"/>
    <property type="match status" value="1"/>
</dbReference>
<dbReference type="PROSITE" id="PS51920">
    <property type="entry name" value="SARS_9B"/>
    <property type="match status" value="1"/>
</dbReference>
<protein>
    <recommendedName>
        <fullName>ORF9b protein</fullName>
        <shortName>ORF9b</shortName>
    </recommendedName>
    <alternativeName>
        <fullName>Accessory protein 9b</fullName>
    </alternativeName>
    <alternativeName>
        <fullName>ORF-9b</fullName>
    </alternativeName>
    <alternativeName>
        <fullName>Protein 9b</fullName>
    </alternativeName>
</protein>